<keyword id="KW-0028">Amino-acid biosynthesis</keyword>
<keyword id="KW-0032">Aminotransferase</keyword>
<keyword id="KW-0368">Histidine biosynthesis</keyword>
<keyword id="KW-0663">Pyridoxal phosphate</keyword>
<keyword id="KW-0808">Transferase</keyword>
<evidence type="ECO:0000250" key="1"/>
<evidence type="ECO:0000305" key="2"/>
<proteinExistence type="inferred from homology"/>
<accession>Q987C8</accession>
<dbReference type="EC" id="2.6.1.9"/>
<dbReference type="EMBL" id="BA000012">
    <property type="protein sequence ID" value="BAB53275.1"/>
    <property type="molecule type" value="Genomic_DNA"/>
</dbReference>
<dbReference type="RefSeq" id="WP_010914582.1">
    <property type="nucleotide sequence ID" value="NC_002678.2"/>
</dbReference>
<dbReference type="SMR" id="Q987C8"/>
<dbReference type="KEGG" id="mlo:mll7105"/>
<dbReference type="PATRIC" id="fig|266835.9.peg.5667"/>
<dbReference type="eggNOG" id="COG0079">
    <property type="taxonomic scope" value="Bacteria"/>
</dbReference>
<dbReference type="HOGENOM" id="CLU_017584_3_3_5"/>
<dbReference type="UniPathway" id="UPA00031">
    <property type="reaction ID" value="UER00012"/>
</dbReference>
<dbReference type="Proteomes" id="UP000000552">
    <property type="component" value="Chromosome"/>
</dbReference>
<dbReference type="GO" id="GO:0004400">
    <property type="term" value="F:histidinol-phosphate transaminase activity"/>
    <property type="evidence" value="ECO:0007669"/>
    <property type="project" value="UniProtKB-UniRule"/>
</dbReference>
<dbReference type="GO" id="GO:0030170">
    <property type="term" value="F:pyridoxal phosphate binding"/>
    <property type="evidence" value="ECO:0007669"/>
    <property type="project" value="InterPro"/>
</dbReference>
<dbReference type="GO" id="GO:0000105">
    <property type="term" value="P:L-histidine biosynthetic process"/>
    <property type="evidence" value="ECO:0007669"/>
    <property type="project" value="UniProtKB-UniRule"/>
</dbReference>
<dbReference type="CDD" id="cd00609">
    <property type="entry name" value="AAT_like"/>
    <property type="match status" value="1"/>
</dbReference>
<dbReference type="Gene3D" id="3.90.1150.10">
    <property type="entry name" value="Aspartate Aminotransferase, domain 1"/>
    <property type="match status" value="1"/>
</dbReference>
<dbReference type="Gene3D" id="3.40.640.10">
    <property type="entry name" value="Type I PLP-dependent aspartate aminotransferase-like (Major domain)"/>
    <property type="match status" value="1"/>
</dbReference>
<dbReference type="HAMAP" id="MF_01023">
    <property type="entry name" value="HisC_aminotrans_2"/>
    <property type="match status" value="1"/>
</dbReference>
<dbReference type="InterPro" id="IPR001917">
    <property type="entry name" value="Aminotrans_II_pyridoxalP_BS"/>
</dbReference>
<dbReference type="InterPro" id="IPR004839">
    <property type="entry name" value="Aminotransferase_I/II_large"/>
</dbReference>
<dbReference type="InterPro" id="IPR005861">
    <property type="entry name" value="HisP_aminotrans"/>
</dbReference>
<dbReference type="InterPro" id="IPR050106">
    <property type="entry name" value="HistidinolP_aminotransfase"/>
</dbReference>
<dbReference type="InterPro" id="IPR015424">
    <property type="entry name" value="PyrdxlP-dep_Trfase"/>
</dbReference>
<dbReference type="InterPro" id="IPR015421">
    <property type="entry name" value="PyrdxlP-dep_Trfase_major"/>
</dbReference>
<dbReference type="InterPro" id="IPR015422">
    <property type="entry name" value="PyrdxlP-dep_Trfase_small"/>
</dbReference>
<dbReference type="NCBIfam" id="TIGR01141">
    <property type="entry name" value="hisC"/>
    <property type="match status" value="1"/>
</dbReference>
<dbReference type="NCBIfam" id="NF003496">
    <property type="entry name" value="PRK05166.1"/>
    <property type="match status" value="1"/>
</dbReference>
<dbReference type="PANTHER" id="PTHR43643:SF6">
    <property type="entry name" value="HISTIDINOL-PHOSPHATE AMINOTRANSFERASE"/>
    <property type="match status" value="1"/>
</dbReference>
<dbReference type="PANTHER" id="PTHR43643">
    <property type="entry name" value="HISTIDINOL-PHOSPHATE AMINOTRANSFERASE 2"/>
    <property type="match status" value="1"/>
</dbReference>
<dbReference type="Pfam" id="PF00155">
    <property type="entry name" value="Aminotran_1_2"/>
    <property type="match status" value="1"/>
</dbReference>
<dbReference type="SUPFAM" id="SSF53383">
    <property type="entry name" value="PLP-dependent transferases"/>
    <property type="match status" value="1"/>
</dbReference>
<dbReference type="PROSITE" id="PS00599">
    <property type="entry name" value="AA_TRANSFER_CLASS_2"/>
    <property type="match status" value="1"/>
</dbReference>
<comment type="catalytic activity">
    <reaction>
        <text>L-histidinol phosphate + 2-oxoglutarate = 3-(imidazol-4-yl)-2-oxopropyl phosphate + L-glutamate</text>
        <dbReference type="Rhea" id="RHEA:23744"/>
        <dbReference type="ChEBI" id="CHEBI:16810"/>
        <dbReference type="ChEBI" id="CHEBI:29985"/>
        <dbReference type="ChEBI" id="CHEBI:57766"/>
        <dbReference type="ChEBI" id="CHEBI:57980"/>
        <dbReference type="EC" id="2.6.1.9"/>
    </reaction>
</comment>
<comment type="cofactor">
    <cofactor evidence="1">
        <name>pyridoxal 5'-phosphate</name>
        <dbReference type="ChEBI" id="CHEBI:597326"/>
    </cofactor>
</comment>
<comment type="pathway">
    <text>Amino-acid biosynthesis; L-histidine biosynthesis; L-histidine from 5-phospho-alpha-D-ribose 1-diphosphate: step 7/9.</text>
</comment>
<comment type="subunit">
    <text evidence="1">Homodimer.</text>
</comment>
<comment type="similarity">
    <text evidence="2">Belongs to the class-II pyridoxal-phosphate-dependent aminotransferase family. Histidinol-phosphate aminotransferase subfamily.</text>
</comment>
<protein>
    <recommendedName>
        <fullName>Histidinol-phosphate aminotransferase 1</fullName>
        <ecNumber>2.6.1.9</ecNumber>
    </recommendedName>
    <alternativeName>
        <fullName>Imidazole acetol-phosphate transaminase 1</fullName>
    </alternativeName>
</protein>
<name>HIS81_RHILO</name>
<gene>
    <name type="primary">hisC1</name>
    <name type="ordered locus">mll7105</name>
</gene>
<feature type="chain" id="PRO_0000153432" description="Histidinol-phosphate aminotransferase 1">
    <location>
        <begin position="1"/>
        <end position="367"/>
    </location>
</feature>
<feature type="modified residue" description="N6-(pyridoxal phosphate)lysine" evidence="1">
    <location>
        <position position="229"/>
    </location>
</feature>
<organism>
    <name type="scientific">Mesorhizobium japonicum (strain LMG 29417 / CECT 9101 / MAFF 303099)</name>
    <name type="common">Mesorhizobium loti (strain MAFF 303099)</name>
    <dbReference type="NCBI Taxonomy" id="266835"/>
    <lineage>
        <taxon>Bacteria</taxon>
        <taxon>Pseudomonadati</taxon>
        <taxon>Pseudomonadota</taxon>
        <taxon>Alphaproteobacteria</taxon>
        <taxon>Hyphomicrobiales</taxon>
        <taxon>Phyllobacteriaceae</taxon>
        <taxon>Mesorhizobium</taxon>
    </lineage>
</organism>
<sequence length="367" mass="39889">MSKASDMVRTEVTRPSPYNSGLTITEVMQRYAPARIAKLGSNENPLGPSPTLATMLQAGAEMFRLYPDPAGRELRQAIAAKYGFGEDQIILGNGSEDLLSVISRAVLRPGDSVVTLYPSFPLHEDYATLMGASVKRVTVNDDLTINADALIDAVRERPRMLLFSNPMNPVGSWLSAGDLSKVLDAVSDETLIVVDEAYAEYAEGDDYASSLPDLCERDQPWIVLRTFSKAFGLAGLRIGFGIVGDPELRALLDRVRTPFNANGMAQAAALAALADEEHLAKVVALAKAERTQVESLLRNMGFDVAPSRGNFLFFNCRQNASAFAEGLLREGVIVKPWKQEGFDSYVRVSIGSPAENDHFMAALSQLL</sequence>
<reference key="1">
    <citation type="journal article" date="2000" name="DNA Res.">
        <title>Complete genome structure of the nitrogen-fixing symbiotic bacterium Mesorhizobium loti.</title>
        <authorList>
            <person name="Kaneko T."/>
            <person name="Nakamura Y."/>
            <person name="Sato S."/>
            <person name="Asamizu E."/>
            <person name="Kato T."/>
            <person name="Sasamoto S."/>
            <person name="Watanabe A."/>
            <person name="Idesawa K."/>
            <person name="Ishikawa A."/>
            <person name="Kawashima K."/>
            <person name="Kimura T."/>
            <person name="Kishida Y."/>
            <person name="Kiyokawa C."/>
            <person name="Kohara M."/>
            <person name="Matsumoto M."/>
            <person name="Matsuno A."/>
            <person name="Mochizuki Y."/>
            <person name="Nakayama S."/>
            <person name="Nakazaki N."/>
            <person name="Shimpo S."/>
            <person name="Sugimoto M."/>
            <person name="Takeuchi C."/>
            <person name="Yamada M."/>
            <person name="Tabata S."/>
        </authorList>
    </citation>
    <scope>NUCLEOTIDE SEQUENCE [LARGE SCALE GENOMIC DNA]</scope>
    <source>
        <strain>LMG 29417 / CECT 9101 / MAFF 303099</strain>
    </source>
</reference>